<gene>
    <name evidence="1" type="primary">coaX</name>
    <name type="ordered locus">BLD_0920</name>
</gene>
<dbReference type="EC" id="2.7.1.33" evidence="1"/>
<dbReference type="EMBL" id="CP000605">
    <property type="protein sequence ID" value="ACD98366.1"/>
    <property type="molecule type" value="Genomic_DNA"/>
</dbReference>
<dbReference type="RefSeq" id="WP_008783138.1">
    <property type="nucleotide sequence ID" value="NZ_AABM02000006.1"/>
</dbReference>
<dbReference type="SMR" id="B3DT97"/>
<dbReference type="KEGG" id="blj:BLD_0920"/>
<dbReference type="HOGENOM" id="CLU_066627_1_0_11"/>
<dbReference type="UniPathway" id="UPA00241">
    <property type="reaction ID" value="UER00352"/>
</dbReference>
<dbReference type="Proteomes" id="UP000002419">
    <property type="component" value="Chromosome"/>
</dbReference>
<dbReference type="GO" id="GO:0005737">
    <property type="term" value="C:cytoplasm"/>
    <property type="evidence" value="ECO:0007669"/>
    <property type="project" value="UniProtKB-SubCell"/>
</dbReference>
<dbReference type="GO" id="GO:0005524">
    <property type="term" value="F:ATP binding"/>
    <property type="evidence" value="ECO:0007669"/>
    <property type="project" value="UniProtKB-UniRule"/>
</dbReference>
<dbReference type="GO" id="GO:0046872">
    <property type="term" value="F:metal ion binding"/>
    <property type="evidence" value="ECO:0007669"/>
    <property type="project" value="UniProtKB-KW"/>
</dbReference>
<dbReference type="GO" id="GO:0004594">
    <property type="term" value="F:pantothenate kinase activity"/>
    <property type="evidence" value="ECO:0007669"/>
    <property type="project" value="UniProtKB-UniRule"/>
</dbReference>
<dbReference type="GO" id="GO:0015937">
    <property type="term" value="P:coenzyme A biosynthetic process"/>
    <property type="evidence" value="ECO:0007669"/>
    <property type="project" value="UniProtKB-UniRule"/>
</dbReference>
<dbReference type="CDD" id="cd24015">
    <property type="entry name" value="ASKHA_NBD_PanK-III"/>
    <property type="match status" value="1"/>
</dbReference>
<dbReference type="Gene3D" id="3.30.420.40">
    <property type="match status" value="2"/>
</dbReference>
<dbReference type="HAMAP" id="MF_01274">
    <property type="entry name" value="Pantothen_kinase_3"/>
    <property type="match status" value="1"/>
</dbReference>
<dbReference type="InterPro" id="IPR043129">
    <property type="entry name" value="ATPase_NBD"/>
</dbReference>
<dbReference type="InterPro" id="IPR004619">
    <property type="entry name" value="Type_III_PanK"/>
</dbReference>
<dbReference type="NCBIfam" id="TIGR00671">
    <property type="entry name" value="baf"/>
    <property type="match status" value="1"/>
</dbReference>
<dbReference type="NCBIfam" id="NF009846">
    <property type="entry name" value="PRK13318.1-4"/>
    <property type="match status" value="1"/>
</dbReference>
<dbReference type="NCBIfam" id="NF009855">
    <property type="entry name" value="PRK13321.1"/>
    <property type="match status" value="1"/>
</dbReference>
<dbReference type="PANTHER" id="PTHR34265">
    <property type="entry name" value="TYPE III PANTOTHENATE KINASE"/>
    <property type="match status" value="1"/>
</dbReference>
<dbReference type="PANTHER" id="PTHR34265:SF1">
    <property type="entry name" value="TYPE III PANTOTHENATE KINASE"/>
    <property type="match status" value="1"/>
</dbReference>
<dbReference type="Pfam" id="PF03309">
    <property type="entry name" value="Pan_kinase"/>
    <property type="match status" value="1"/>
</dbReference>
<dbReference type="SUPFAM" id="SSF53067">
    <property type="entry name" value="Actin-like ATPase domain"/>
    <property type="match status" value="2"/>
</dbReference>
<evidence type="ECO:0000255" key="1">
    <source>
        <dbReference type="HAMAP-Rule" id="MF_01274"/>
    </source>
</evidence>
<organism>
    <name type="scientific">Bifidobacterium longum (strain DJO10A)</name>
    <dbReference type="NCBI Taxonomy" id="205913"/>
    <lineage>
        <taxon>Bacteria</taxon>
        <taxon>Bacillati</taxon>
        <taxon>Actinomycetota</taxon>
        <taxon>Actinomycetes</taxon>
        <taxon>Bifidobacteriales</taxon>
        <taxon>Bifidobacteriaceae</taxon>
        <taxon>Bifidobacterium</taxon>
    </lineage>
</organism>
<keyword id="KW-0067">ATP-binding</keyword>
<keyword id="KW-0173">Coenzyme A biosynthesis</keyword>
<keyword id="KW-0963">Cytoplasm</keyword>
<keyword id="KW-0418">Kinase</keyword>
<keyword id="KW-0479">Metal-binding</keyword>
<keyword id="KW-0547">Nucleotide-binding</keyword>
<keyword id="KW-0630">Potassium</keyword>
<keyword id="KW-0808">Transferase</keyword>
<name>COAX_BIFLD</name>
<reference key="1">
    <citation type="journal article" date="2008" name="BMC Genomics">
        <title>Comparative genomic analysis of the gut bacterium Bifidobacterium longum reveals loci susceptible to deletion during pure culture growth.</title>
        <authorList>
            <person name="Lee J.H."/>
            <person name="Karamychev V.N."/>
            <person name="Kozyavkin S.A."/>
            <person name="Mills D."/>
            <person name="Pavlov A.R."/>
            <person name="Pavlova N.V."/>
            <person name="Polouchine N.N."/>
            <person name="Richardson P.M."/>
            <person name="Shakhova V.V."/>
            <person name="Slesarev A.I."/>
            <person name="Weimer B."/>
            <person name="O'Sullivan D.J."/>
        </authorList>
    </citation>
    <scope>NUCLEOTIDE SEQUENCE [LARGE SCALE GENOMIC DNA]</scope>
    <source>
        <strain>DJO10A</strain>
    </source>
</reference>
<comment type="function">
    <text evidence="1">Catalyzes the phosphorylation of pantothenate (Pan), the first step in CoA biosynthesis.</text>
</comment>
<comment type="catalytic activity">
    <reaction evidence="1">
        <text>(R)-pantothenate + ATP = (R)-4'-phosphopantothenate + ADP + H(+)</text>
        <dbReference type="Rhea" id="RHEA:16373"/>
        <dbReference type="ChEBI" id="CHEBI:10986"/>
        <dbReference type="ChEBI" id="CHEBI:15378"/>
        <dbReference type="ChEBI" id="CHEBI:29032"/>
        <dbReference type="ChEBI" id="CHEBI:30616"/>
        <dbReference type="ChEBI" id="CHEBI:456216"/>
        <dbReference type="EC" id="2.7.1.33"/>
    </reaction>
</comment>
<comment type="cofactor">
    <cofactor evidence="1">
        <name>NH4(+)</name>
        <dbReference type="ChEBI" id="CHEBI:28938"/>
    </cofactor>
    <cofactor evidence="1">
        <name>K(+)</name>
        <dbReference type="ChEBI" id="CHEBI:29103"/>
    </cofactor>
    <text evidence="1">A monovalent cation. Ammonium or potassium.</text>
</comment>
<comment type="pathway">
    <text evidence="1">Cofactor biosynthesis; coenzyme A biosynthesis; CoA from (R)-pantothenate: step 1/5.</text>
</comment>
<comment type="subunit">
    <text evidence="1">Homodimer.</text>
</comment>
<comment type="subcellular location">
    <subcellularLocation>
        <location evidence="1">Cytoplasm</location>
    </subcellularLocation>
</comment>
<comment type="similarity">
    <text evidence="1">Belongs to the type III pantothenate kinase family.</text>
</comment>
<feature type="chain" id="PRO_1000140223" description="Type III pantothenate kinase">
    <location>
        <begin position="1"/>
        <end position="256"/>
    </location>
</feature>
<feature type="active site" description="Proton acceptor" evidence="1">
    <location>
        <position position="109"/>
    </location>
</feature>
<feature type="binding site" evidence="1">
    <location>
        <begin position="6"/>
        <end position="13"/>
    </location>
    <ligand>
        <name>ATP</name>
        <dbReference type="ChEBI" id="CHEBI:30616"/>
    </ligand>
</feature>
<feature type="binding site" evidence="1">
    <location>
        <begin position="107"/>
        <end position="110"/>
    </location>
    <ligand>
        <name>substrate</name>
    </ligand>
</feature>
<feature type="binding site" evidence="1">
    <location>
        <position position="129"/>
    </location>
    <ligand>
        <name>K(+)</name>
        <dbReference type="ChEBI" id="CHEBI:29103"/>
    </ligand>
</feature>
<feature type="binding site" evidence="1">
    <location>
        <position position="132"/>
    </location>
    <ligand>
        <name>ATP</name>
        <dbReference type="ChEBI" id="CHEBI:30616"/>
    </ligand>
</feature>
<feature type="binding site" evidence="1">
    <location>
        <position position="184"/>
    </location>
    <ligand>
        <name>substrate</name>
    </ligand>
</feature>
<proteinExistence type="inferred from homology"/>
<accession>B3DT97</accession>
<protein>
    <recommendedName>
        <fullName evidence="1">Type III pantothenate kinase</fullName>
        <ecNumber evidence="1">2.7.1.33</ecNumber>
    </recommendedName>
    <alternativeName>
        <fullName evidence="1">PanK-III</fullName>
    </alternativeName>
    <alternativeName>
        <fullName evidence="1">Pantothenic acid kinase</fullName>
    </alternativeName>
</protein>
<sequence>MLVAVDIGNTNIVLGFLDGDAIAGTYRITTKANHTSDEYGLFLTEFLRMSGFQPSDVDDVIICSVVPKVMHSFRSSIVKFLDIDPMVVGPGIKTGMNVRVDDPKSLGADILADCAGAYYEYGGPVLVADFGTATTFTHVSDKGVVDSGVITTGIRAGAAALWGDTAQLPEVEITRPDTILGTNTKTCMQAGLYYTFLGGVERTIRQFRRELGGEDFKVITTGGLGRVFENDTELIDVYDPDLIFKGMAHIYSRNVK</sequence>